<dbReference type="EC" id="1.1.1.25" evidence="1"/>
<dbReference type="EMBL" id="CP000653">
    <property type="protein sequence ID" value="ABP62370.1"/>
    <property type="molecule type" value="Genomic_DNA"/>
</dbReference>
<dbReference type="SMR" id="A4WF90"/>
<dbReference type="STRING" id="399742.Ent638_3713"/>
<dbReference type="KEGG" id="ent:Ent638_3713"/>
<dbReference type="eggNOG" id="COG0169">
    <property type="taxonomic scope" value="Bacteria"/>
</dbReference>
<dbReference type="HOGENOM" id="CLU_044063_2_1_6"/>
<dbReference type="UniPathway" id="UPA00053">
    <property type="reaction ID" value="UER00087"/>
</dbReference>
<dbReference type="Proteomes" id="UP000000230">
    <property type="component" value="Chromosome"/>
</dbReference>
<dbReference type="GO" id="GO:0005829">
    <property type="term" value="C:cytosol"/>
    <property type="evidence" value="ECO:0007669"/>
    <property type="project" value="TreeGrafter"/>
</dbReference>
<dbReference type="GO" id="GO:0050661">
    <property type="term" value="F:NADP binding"/>
    <property type="evidence" value="ECO:0007669"/>
    <property type="project" value="InterPro"/>
</dbReference>
<dbReference type="GO" id="GO:0004764">
    <property type="term" value="F:shikimate 3-dehydrogenase (NADP+) activity"/>
    <property type="evidence" value="ECO:0007669"/>
    <property type="project" value="UniProtKB-UniRule"/>
</dbReference>
<dbReference type="GO" id="GO:0008652">
    <property type="term" value="P:amino acid biosynthetic process"/>
    <property type="evidence" value="ECO:0007669"/>
    <property type="project" value="UniProtKB-KW"/>
</dbReference>
<dbReference type="GO" id="GO:0009073">
    <property type="term" value="P:aromatic amino acid family biosynthetic process"/>
    <property type="evidence" value="ECO:0007669"/>
    <property type="project" value="UniProtKB-KW"/>
</dbReference>
<dbReference type="GO" id="GO:0009423">
    <property type="term" value="P:chorismate biosynthetic process"/>
    <property type="evidence" value="ECO:0007669"/>
    <property type="project" value="UniProtKB-UniRule"/>
</dbReference>
<dbReference type="GO" id="GO:0019632">
    <property type="term" value="P:shikimate metabolic process"/>
    <property type="evidence" value="ECO:0007669"/>
    <property type="project" value="InterPro"/>
</dbReference>
<dbReference type="CDD" id="cd01065">
    <property type="entry name" value="NAD_bind_Shikimate_DH"/>
    <property type="match status" value="1"/>
</dbReference>
<dbReference type="FunFam" id="3.40.50.10860:FF:000006">
    <property type="entry name" value="Shikimate dehydrogenase (NADP(+))"/>
    <property type="match status" value="1"/>
</dbReference>
<dbReference type="FunFam" id="3.40.50.720:FF:000104">
    <property type="entry name" value="Shikimate dehydrogenase (NADP(+))"/>
    <property type="match status" value="1"/>
</dbReference>
<dbReference type="Gene3D" id="3.40.50.10860">
    <property type="entry name" value="Leucine Dehydrogenase, chain A, domain 1"/>
    <property type="match status" value="1"/>
</dbReference>
<dbReference type="Gene3D" id="3.40.50.720">
    <property type="entry name" value="NAD(P)-binding Rossmann-like Domain"/>
    <property type="match status" value="1"/>
</dbReference>
<dbReference type="HAMAP" id="MF_00222">
    <property type="entry name" value="Shikimate_DH_AroE"/>
    <property type="match status" value="1"/>
</dbReference>
<dbReference type="InterPro" id="IPR046346">
    <property type="entry name" value="Aminoacid_DH-like_N_sf"/>
</dbReference>
<dbReference type="InterPro" id="IPR036291">
    <property type="entry name" value="NAD(P)-bd_dom_sf"/>
</dbReference>
<dbReference type="InterPro" id="IPR041121">
    <property type="entry name" value="SDH_C"/>
</dbReference>
<dbReference type="InterPro" id="IPR011342">
    <property type="entry name" value="Shikimate_DH"/>
</dbReference>
<dbReference type="InterPro" id="IPR013708">
    <property type="entry name" value="Shikimate_DH-bd_N"/>
</dbReference>
<dbReference type="InterPro" id="IPR022893">
    <property type="entry name" value="Shikimate_DH_fam"/>
</dbReference>
<dbReference type="InterPro" id="IPR006151">
    <property type="entry name" value="Shikm_DH/Glu-tRNA_Rdtase"/>
</dbReference>
<dbReference type="NCBIfam" id="TIGR00507">
    <property type="entry name" value="aroE"/>
    <property type="match status" value="1"/>
</dbReference>
<dbReference type="NCBIfam" id="NF001310">
    <property type="entry name" value="PRK00258.1-2"/>
    <property type="match status" value="1"/>
</dbReference>
<dbReference type="PANTHER" id="PTHR21089:SF1">
    <property type="entry name" value="BIFUNCTIONAL 3-DEHYDROQUINATE DEHYDRATASE_SHIKIMATE DEHYDROGENASE, CHLOROPLASTIC"/>
    <property type="match status" value="1"/>
</dbReference>
<dbReference type="PANTHER" id="PTHR21089">
    <property type="entry name" value="SHIKIMATE DEHYDROGENASE"/>
    <property type="match status" value="1"/>
</dbReference>
<dbReference type="Pfam" id="PF18317">
    <property type="entry name" value="SDH_C"/>
    <property type="match status" value="1"/>
</dbReference>
<dbReference type="Pfam" id="PF01488">
    <property type="entry name" value="Shikimate_DH"/>
    <property type="match status" value="1"/>
</dbReference>
<dbReference type="Pfam" id="PF08501">
    <property type="entry name" value="Shikimate_dh_N"/>
    <property type="match status" value="1"/>
</dbReference>
<dbReference type="SUPFAM" id="SSF53223">
    <property type="entry name" value="Aminoacid dehydrogenase-like, N-terminal domain"/>
    <property type="match status" value="1"/>
</dbReference>
<dbReference type="SUPFAM" id="SSF51735">
    <property type="entry name" value="NAD(P)-binding Rossmann-fold domains"/>
    <property type="match status" value="1"/>
</dbReference>
<evidence type="ECO:0000255" key="1">
    <source>
        <dbReference type="HAMAP-Rule" id="MF_00222"/>
    </source>
</evidence>
<keyword id="KW-0028">Amino-acid biosynthesis</keyword>
<keyword id="KW-0057">Aromatic amino acid biosynthesis</keyword>
<keyword id="KW-0521">NADP</keyword>
<keyword id="KW-0560">Oxidoreductase</keyword>
<feature type="chain" id="PRO_1000058664" description="Shikimate dehydrogenase (NADP(+))">
    <location>
        <begin position="1"/>
        <end position="272"/>
    </location>
</feature>
<feature type="active site" description="Proton acceptor" evidence="1">
    <location>
        <position position="65"/>
    </location>
</feature>
<feature type="binding site" evidence="1">
    <location>
        <begin position="14"/>
        <end position="16"/>
    </location>
    <ligand>
        <name>shikimate</name>
        <dbReference type="ChEBI" id="CHEBI:36208"/>
    </ligand>
</feature>
<feature type="binding site" evidence="1">
    <location>
        <position position="61"/>
    </location>
    <ligand>
        <name>shikimate</name>
        <dbReference type="ChEBI" id="CHEBI:36208"/>
    </ligand>
</feature>
<feature type="binding site" evidence="1">
    <location>
        <position position="77"/>
    </location>
    <ligand>
        <name>NADP(+)</name>
        <dbReference type="ChEBI" id="CHEBI:58349"/>
    </ligand>
</feature>
<feature type="binding site" evidence="1">
    <location>
        <position position="86"/>
    </location>
    <ligand>
        <name>shikimate</name>
        <dbReference type="ChEBI" id="CHEBI:36208"/>
    </ligand>
</feature>
<feature type="binding site" evidence="1">
    <location>
        <position position="102"/>
    </location>
    <ligand>
        <name>shikimate</name>
        <dbReference type="ChEBI" id="CHEBI:36208"/>
    </ligand>
</feature>
<feature type="binding site" evidence="1">
    <location>
        <begin position="126"/>
        <end position="130"/>
    </location>
    <ligand>
        <name>NADP(+)</name>
        <dbReference type="ChEBI" id="CHEBI:58349"/>
    </ligand>
</feature>
<feature type="binding site" evidence="1">
    <location>
        <begin position="149"/>
        <end position="154"/>
    </location>
    <ligand>
        <name>NADP(+)</name>
        <dbReference type="ChEBI" id="CHEBI:58349"/>
    </ligand>
</feature>
<feature type="binding site" evidence="1">
    <location>
        <position position="213"/>
    </location>
    <ligand>
        <name>NADP(+)</name>
        <dbReference type="ChEBI" id="CHEBI:58349"/>
    </ligand>
</feature>
<feature type="binding site" evidence="1">
    <location>
        <position position="215"/>
    </location>
    <ligand>
        <name>shikimate</name>
        <dbReference type="ChEBI" id="CHEBI:36208"/>
    </ligand>
</feature>
<feature type="binding site" evidence="1">
    <location>
        <position position="237"/>
    </location>
    <ligand>
        <name>NADP(+)</name>
        <dbReference type="ChEBI" id="CHEBI:58349"/>
    </ligand>
</feature>
<comment type="function">
    <text evidence="1">Involved in the biosynthesis of the chorismate, which leads to the biosynthesis of aromatic amino acids. Catalyzes the reversible NADPH linked reduction of 3-dehydroshikimate (DHSA) to yield shikimate (SA).</text>
</comment>
<comment type="catalytic activity">
    <reaction evidence="1">
        <text>shikimate + NADP(+) = 3-dehydroshikimate + NADPH + H(+)</text>
        <dbReference type="Rhea" id="RHEA:17737"/>
        <dbReference type="ChEBI" id="CHEBI:15378"/>
        <dbReference type="ChEBI" id="CHEBI:16630"/>
        <dbReference type="ChEBI" id="CHEBI:36208"/>
        <dbReference type="ChEBI" id="CHEBI:57783"/>
        <dbReference type="ChEBI" id="CHEBI:58349"/>
        <dbReference type="EC" id="1.1.1.25"/>
    </reaction>
</comment>
<comment type="pathway">
    <text evidence="1">Metabolic intermediate biosynthesis; chorismate biosynthesis; chorismate from D-erythrose 4-phosphate and phosphoenolpyruvate: step 4/7.</text>
</comment>
<comment type="subunit">
    <text evidence="1">Homodimer.</text>
</comment>
<comment type="similarity">
    <text evidence="1">Belongs to the shikimate dehydrogenase family.</text>
</comment>
<name>AROE_ENT38</name>
<reference key="1">
    <citation type="journal article" date="2010" name="PLoS Genet.">
        <title>Genome sequence of the plant growth promoting endophytic bacterium Enterobacter sp. 638.</title>
        <authorList>
            <person name="Taghavi S."/>
            <person name="van der Lelie D."/>
            <person name="Hoffman A."/>
            <person name="Zhang Y.B."/>
            <person name="Walla M.D."/>
            <person name="Vangronsveld J."/>
            <person name="Newman L."/>
            <person name="Monchy S."/>
        </authorList>
    </citation>
    <scope>NUCLEOTIDE SEQUENCE [LARGE SCALE GENOMIC DNA]</scope>
    <source>
        <strain>638</strain>
    </source>
</reference>
<gene>
    <name evidence="1" type="primary">aroE</name>
    <name type="ordered locus">Ent638_3713</name>
</gene>
<organism>
    <name type="scientific">Enterobacter sp. (strain 638)</name>
    <dbReference type="NCBI Taxonomy" id="399742"/>
    <lineage>
        <taxon>Bacteria</taxon>
        <taxon>Pseudomonadati</taxon>
        <taxon>Pseudomonadota</taxon>
        <taxon>Gammaproteobacteria</taxon>
        <taxon>Enterobacterales</taxon>
        <taxon>Enterobacteriaceae</taxon>
        <taxon>Enterobacter</taxon>
    </lineage>
</organism>
<proteinExistence type="inferred from homology"/>
<accession>A4WF90</accession>
<protein>
    <recommendedName>
        <fullName evidence="1">Shikimate dehydrogenase (NADP(+))</fullName>
        <shortName evidence="1">SDH</shortName>
        <ecNumber evidence="1">1.1.1.25</ecNumber>
    </recommendedName>
</protein>
<sequence>MEKYAVFGNPIAHSKSPFIHQQFAQQLHIDYSYDRVLAPVDDFLATLNAFFCEGARGANVTVPFKEDAFERADELTERASLAGAVNTLKRLDDGRLLGDNTDGIGLLSDLERLSFIKPGSRVLLIGAGGASRGVLLPLLSLDCAVTITNRTYSRAKDLATLFAHTGSISAVAMEDLEGHEFDLIINATSSGIAGDVPAIPASLVKAHVYFYDMFYQKGSTPFLSWCEDHGAKHMSDGLGMLVGQAAHAVLLWHGVLPAVEPVIEKLKQELLA</sequence>